<reference key="1">
    <citation type="journal article" date="2009" name="Infect. Immun.">
        <title>Comparative genomics reveal extensive transposon-mediated genomic plasticity and diversity among potential effector proteins within the genus Coxiella.</title>
        <authorList>
            <person name="Beare P.A."/>
            <person name="Unsworth N."/>
            <person name="Andoh M."/>
            <person name="Voth D.E."/>
            <person name="Omsland A."/>
            <person name="Gilk S.D."/>
            <person name="Williams K.P."/>
            <person name="Sobral B.W."/>
            <person name="Kupko J.J. III"/>
            <person name="Porcella S.F."/>
            <person name="Samuel J.E."/>
            <person name="Heinzen R.A."/>
        </authorList>
    </citation>
    <scope>NUCLEOTIDE SEQUENCE [LARGE SCALE GENOMIC DNA]</scope>
    <source>
        <strain>CbuG_Q212</strain>
    </source>
</reference>
<evidence type="ECO:0000255" key="1">
    <source>
        <dbReference type="HAMAP-Rule" id="MF_00009"/>
    </source>
</evidence>
<organism>
    <name type="scientific">Coxiella burnetii (strain CbuG_Q212)</name>
    <name type="common">Coxiella burnetii (strain Q212)</name>
    <dbReference type="NCBI Taxonomy" id="434923"/>
    <lineage>
        <taxon>Bacteria</taxon>
        <taxon>Pseudomonadati</taxon>
        <taxon>Pseudomonadota</taxon>
        <taxon>Gammaproteobacteria</taxon>
        <taxon>Legionellales</taxon>
        <taxon>Coxiellaceae</taxon>
        <taxon>Coxiella</taxon>
    </lineage>
</organism>
<comment type="function">
    <text evidence="1">Single strand-specific metallo-endoribonuclease involved in late-stage 70S ribosome quality control and in maturation of the 3' terminus of the 16S rRNA.</text>
</comment>
<comment type="cofactor">
    <cofactor evidence="1">
        <name>Zn(2+)</name>
        <dbReference type="ChEBI" id="CHEBI:29105"/>
    </cofactor>
    <text evidence="1">Binds 1 zinc ion.</text>
</comment>
<comment type="subcellular location">
    <subcellularLocation>
        <location evidence="1">Cytoplasm</location>
    </subcellularLocation>
</comment>
<comment type="similarity">
    <text evidence="1">Belongs to the endoribonuclease YbeY family.</text>
</comment>
<proteinExistence type="inferred from homology"/>
<accession>B6J1A6</accession>
<dbReference type="EC" id="3.1.-.-" evidence="1"/>
<dbReference type="EMBL" id="CP001019">
    <property type="protein sequence ID" value="ACJ18734.1"/>
    <property type="molecule type" value="Genomic_DNA"/>
</dbReference>
<dbReference type="RefSeq" id="WP_005771102.1">
    <property type="nucleotide sequence ID" value="NC_011527.1"/>
</dbReference>
<dbReference type="SMR" id="B6J1A6"/>
<dbReference type="KEGG" id="cbg:CbuG_1432"/>
<dbReference type="HOGENOM" id="CLU_106710_0_1_6"/>
<dbReference type="GO" id="GO:0005737">
    <property type="term" value="C:cytoplasm"/>
    <property type="evidence" value="ECO:0007669"/>
    <property type="project" value="UniProtKB-SubCell"/>
</dbReference>
<dbReference type="GO" id="GO:0004222">
    <property type="term" value="F:metalloendopeptidase activity"/>
    <property type="evidence" value="ECO:0007669"/>
    <property type="project" value="InterPro"/>
</dbReference>
<dbReference type="GO" id="GO:0004521">
    <property type="term" value="F:RNA endonuclease activity"/>
    <property type="evidence" value="ECO:0007669"/>
    <property type="project" value="UniProtKB-UniRule"/>
</dbReference>
<dbReference type="GO" id="GO:0008270">
    <property type="term" value="F:zinc ion binding"/>
    <property type="evidence" value="ECO:0007669"/>
    <property type="project" value="UniProtKB-UniRule"/>
</dbReference>
<dbReference type="GO" id="GO:0006364">
    <property type="term" value="P:rRNA processing"/>
    <property type="evidence" value="ECO:0007669"/>
    <property type="project" value="UniProtKB-UniRule"/>
</dbReference>
<dbReference type="Gene3D" id="3.40.390.30">
    <property type="entry name" value="Metalloproteases ('zincins'), catalytic domain"/>
    <property type="match status" value="1"/>
</dbReference>
<dbReference type="HAMAP" id="MF_00009">
    <property type="entry name" value="Endoribonucl_YbeY"/>
    <property type="match status" value="1"/>
</dbReference>
<dbReference type="InterPro" id="IPR023091">
    <property type="entry name" value="MetalPrtase_cat_dom_sf_prd"/>
</dbReference>
<dbReference type="InterPro" id="IPR002036">
    <property type="entry name" value="YbeY"/>
</dbReference>
<dbReference type="InterPro" id="IPR020549">
    <property type="entry name" value="YbeY_CS"/>
</dbReference>
<dbReference type="NCBIfam" id="TIGR00043">
    <property type="entry name" value="rRNA maturation RNase YbeY"/>
    <property type="match status" value="1"/>
</dbReference>
<dbReference type="PANTHER" id="PTHR46986">
    <property type="entry name" value="ENDORIBONUCLEASE YBEY, CHLOROPLASTIC"/>
    <property type="match status" value="1"/>
</dbReference>
<dbReference type="PANTHER" id="PTHR46986:SF1">
    <property type="entry name" value="ENDORIBONUCLEASE YBEY, CHLOROPLASTIC"/>
    <property type="match status" value="1"/>
</dbReference>
<dbReference type="Pfam" id="PF02130">
    <property type="entry name" value="YbeY"/>
    <property type="match status" value="1"/>
</dbReference>
<dbReference type="SUPFAM" id="SSF55486">
    <property type="entry name" value="Metalloproteases ('zincins'), catalytic domain"/>
    <property type="match status" value="1"/>
</dbReference>
<dbReference type="PROSITE" id="PS01306">
    <property type="entry name" value="UPF0054"/>
    <property type="match status" value="1"/>
</dbReference>
<feature type="chain" id="PRO_1000089170" description="Endoribonuclease YbeY">
    <location>
        <begin position="1"/>
        <end position="152"/>
    </location>
</feature>
<feature type="binding site" evidence="1">
    <location>
        <position position="114"/>
    </location>
    <ligand>
        <name>Zn(2+)</name>
        <dbReference type="ChEBI" id="CHEBI:29105"/>
        <note>catalytic</note>
    </ligand>
</feature>
<feature type="binding site" evidence="1">
    <location>
        <position position="118"/>
    </location>
    <ligand>
        <name>Zn(2+)</name>
        <dbReference type="ChEBI" id="CHEBI:29105"/>
        <note>catalytic</note>
    </ligand>
</feature>
<feature type="binding site" evidence="1">
    <location>
        <position position="124"/>
    </location>
    <ligand>
        <name>Zn(2+)</name>
        <dbReference type="ChEBI" id="CHEBI:29105"/>
        <note>catalytic</note>
    </ligand>
</feature>
<sequence>MISIDVQHATQFEDLPSLSNIEQWVETALQFIVTDKNKSALTIRFIDKEESTELNEHYRHKKGPTNVLSFPDEPIPGFPSESFGDLAICAPLVAEEAHAQHKTTEAHFAHLITHGFLHLLGYDHVENEDAEEMENLEIKILSQLGFENPYEE</sequence>
<name>YBEY_COXB2</name>
<gene>
    <name evidence="1" type="primary">ybeY</name>
    <name type="ordered locus">CbuG_1432</name>
</gene>
<protein>
    <recommendedName>
        <fullName evidence="1">Endoribonuclease YbeY</fullName>
        <ecNumber evidence="1">3.1.-.-</ecNumber>
    </recommendedName>
</protein>
<keyword id="KW-0963">Cytoplasm</keyword>
<keyword id="KW-0255">Endonuclease</keyword>
<keyword id="KW-0378">Hydrolase</keyword>
<keyword id="KW-0479">Metal-binding</keyword>
<keyword id="KW-0540">Nuclease</keyword>
<keyword id="KW-0690">Ribosome biogenesis</keyword>
<keyword id="KW-0698">rRNA processing</keyword>
<keyword id="KW-0862">Zinc</keyword>